<name>SET2_KLULA</name>
<keyword id="KW-0158">Chromosome</keyword>
<keyword id="KW-0175">Coiled coil</keyword>
<keyword id="KW-0489">Methyltransferase</keyword>
<keyword id="KW-0539">Nucleus</keyword>
<keyword id="KW-1185">Reference proteome</keyword>
<keyword id="KW-0678">Repressor</keyword>
<keyword id="KW-0949">S-adenosyl-L-methionine</keyword>
<keyword id="KW-0804">Transcription</keyword>
<keyword id="KW-0805">Transcription regulation</keyword>
<keyword id="KW-0808">Transferase</keyword>
<protein>
    <recommendedName>
        <fullName>Histone-lysine N-methyltransferase, H3 lysine-36 specific</fullName>
        <ecNumber evidence="2">2.1.1.359</ecNumber>
    </recommendedName>
    <alternativeName>
        <fullName>SET domain-containing protein 2</fullName>
    </alternativeName>
</protein>
<sequence length="702" mass="81294">MTESGNGIVNTRQPKLFLDVPDMTSEAKKTYAELDVCTYTPKNLGDSKHEFMECDCFEEFRDGLNHACGEDSDCINRATLIECVNGLCKHSCGTDCQNQRFQKKAYADISVFKTERKGFGVRANSDIEPHNFIYEYIGEVIQEEEFRNRMVKYDQMGFKHFYFMMLQTGQFIDATLKGCIARFCNHSCNPNAYVNKWVVNGKLKMGIFANRHISKGEEVTFDYNVDRYGANAQPCYCEEPNCIGFLGGKTQTDAASLLPQSFADALGIRPSMEKKWINMMKAKGEKIAKSDTTTVNVDFVNSLSLEPCTKTEDVNRVMSVLLQIDDAFIAEKLLERITLTEDEAMHYQFIKLHGYLIFSRLITMFEDKPDIIWKILNFLLVLPKTTKNGIIHSGIDKKVEQLKNTPKFEVICEDLLEKWSKYETYTRISKKDISENSKVIDLRRIRLPIGWEIIHENGRPVYYNAQRQIKQANPPTDSAYRSNSSHNLSGVSDPKSRSATPSSNTSRYSGSVKYIPTPTYGQMQQKRTLSPEEYEKRKKSRIEWEQKELELRKLMEQETLKAKLDQETQKKSELERIIEEANKQKELERLQKLKQQQEDEERKKVKKQASHVNAIENKWVKFFAQHVPNLIKNYQKDVGKDVLKESARNIVKSLAQKELKKDSSRSPPEELSKEKRAKVKTFSMQYMDRLVAKMKEKKEKKR</sequence>
<evidence type="ECO:0000250" key="1"/>
<evidence type="ECO:0000250" key="2">
    <source>
        <dbReference type="UniProtKB" id="P46995"/>
    </source>
</evidence>
<evidence type="ECO:0000255" key="3"/>
<evidence type="ECO:0000255" key="4">
    <source>
        <dbReference type="PROSITE-ProRule" id="PRU00155"/>
    </source>
</evidence>
<evidence type="ECO:0000255" key="5">
    <source>
        <dbReference type="PROSITE-ProRule" id="PRU00190"/>
    </source>
</evidence>
<evidence type="ECO:0000255" key="6">
    <source>
        <dbReference type="PROSITE-ProRule" id="PRU00562"/>
    </source>
</evidence>
<evidence type="ECO:0000255" key="7">
    <source>
        <dbReference type="PROSITE-ProRule" id="PRU00901"/>
    </source>
</evidence>
<evidence type="ECO:0000256" key="8">
    <source>
        <dbReference type="SAM" id="MobiDB-lite"/>
    </source>
</evidence>
<comment type="function">
    <text evidence="2">Histone methyltransferase that trimethylates histone H3 'Lys-36' forming H3K36me3. Involved in transcription elongation as well as in transcription repression.</text>
</comment>
<comment type="catalytic activity">
    <reaction evidence="2 7">
        <text>L-lysyl(36)-[histone H3] + 3 S-adenosyl-L-methionine = N(6),N(6),N(6)-trimethyl-L-lysyl(36)-[histone H3] + 3 S-adenosyl-L-homocysteine + 3 H(+)</text>
        <dbReference type="Rhea" id="RHEA:60324"/>
        <dbReference type="Rhea" id="RHEA-COMP:9785"/>
        <dbReference type="Rhea" id="RHEA-COMP:15536"/>
        <dbReference type="ChEBI" id="CHEBI:15378"/>
        <dbReference type="ChEBI" id="CHEBI:29969"/>
        <dbReference type="ChEBI" id="CHEBI:57856"/>
        <dbReference type="ChEBI" id="CHEBI:59789"/>
        <dbReference type="ChEBI" id="CHEBI:61961"/>
        <dbReference type="EC" id="2.1.1.359"/>
    </reaction>
</comment>
<comment type="subcellular location">
    <subcellularLocation>
        <location evidence="1">Nucleus</location>
    </subcellularLocation>
    <subcellularLocation>
        <location evidence="1">Chromosome</location>
    </subcellularLocation>
</comment>
<comment type="domain">
    <text evidence="1">The AWS and SET domains are necessary for transcription repression.</text>
</comment>
<comment type="similarity">
    <text evidence="7">Belongs to the class V-like SAM-binding methyltransferase superfamily. Histone-lysine methyltransferase family. SET2 subfamily.</text>
</comment>
<dbReference type="EC" id="2.1.1.359" evidence="2"/>
<dbReference type="EMBL" id="CR382121">
    <property type="protein sequence ID" value="CAH02882.1"/>
    <property type="molecule type" value="Genomic_DNA"/>
</dbReference>
<dbReference type="RefSeq" id="XP_451294.1">
    <property type="nucleotide sequence ID" value="XM_451294.1"/>
</dbReference>
<dbReference type="SMR" id="Q6CXP5"/>
<dbReference type="FunCoup" id="Q6CXP5">
    <property type="interactions" value="154"/>
</dbReference>
<dbReference type="STRING" id="284590.Q6CXP5"/>
<dbReference type="PaxDb" id="284590-Q6CXP5"/>
<dbReference type="KEGG" id="kla:KLLA0_A06600g"/>
<dbReference type="eggNOG" id="KOG4442">
    <property type="taxonomic scope" value="Eukaryota"/>
</dbReference>
<dbReference type="HOGENOM" id="CLU_008492_1_1_1"/>
<dbReference type="InParanoid" id="Q6CXP5"/>
<dbReference type="OMA" id="AQSQPCY"/>
<dbReference type="Proteomes" id="UP000000598">
    <property type="component" value="Chromosome A"/>
</dbReference>
<dbReference type="GO" id="GO:0005694">
    <property type="term" value="C:chromosome"/>
    <property type="evidence" value="ECO:0007669"/>
    <property type="project" value="UniProtKB-SubCell"/>
</dbReference>
<dbReference type="GO" id="GO:0005634">
    <property type="term" value="C:nucleus"/>
    <property type="evidence" value="ECO:0007669"/>
    <property type="project" value="UniProtKB-SubCell"/>
</dbReference>
<dbReference type="GO" id="GO:0140955">
    <property type="term" value="F:histone H3K36 trimethyltransferase activity"/>
    <property type="evidence" value="ECO:0007669"/>
    <property type="project" value="UniProtKB-EC"/>
</dbReference>
<dbReference type="GO" id="GO:0032259">
    <property type="term" value="P:methylation"/>
    <property type="evidence" value="ECO:0007669"/>
    <property type="project" value="UniProtKB-KW"/>
</dbReference>
<dbReference type="GO" id="GO:0006355">
    <property type="term" value="P:regulation of DNA-templated transcription"/>
    <property type="evidence" value="ECO:0007669"/>
    <property type="project" value="InterPro"/>
</dbReference>
<dbReference type="CDD" id="cd19172">
    <property type="entry name" value="SET_SETD2"/>
    <property type="match status" value="1"/>
</dbReference>
<dbReference type="FunFam" id="2.170.270.10:FF:000033">
    <property type="entry name" value="Histone-lysine N-methyltransferase"/>
    <property type="match status" value="1"/>
</dbReference>
<dbReference type="Gene3D" id="2.170.270.10">
    <property type="entry name" value="SET domain"/>
    <property type="match status" value="1"/>
</dbReference>
<dbReference type="Gene3D" id="1.10.1740.100">
    <property type="entry name" value="Set2, Rpb1 interacting domain"/>
    <property type="match status" value="1"/>
</dbReference>
<dbReference type="InterPro" id="IPR006560">
    <property type="entry name" value="AWS_dom"/>
</dbReference>
<dbReference type="InterPro" id="IPR003616">
    <property type="entry name" value="Post-SET_dom"/>
</dbReference>
<dbReference type="InterPro" id="IPR025788">
    <property type="entry name" value="Set2_fungi"/>
</dbReference>
<dbReference type="InterPro" id="IPR050777">
    <property type="entry name" value="SET2_Histone-Lys_MeTrsfase"/>
</dbReference>
<dbReference type="InterPro" id="IPR001214">
    <property type="entry name" value="SET_dom"/>
</dbReference>
<dbReference type="InterPro" id="IPR046341">
    <property type="entry name" value="SET_dom_sf"/>
</dbReference>
<dbReference type="InterPro" id="IPR044437">
    <property type="entry name" value="SETD2/Set2_SET"/>
</dbReference>
<dbReference type="InterPro" id="IPR013257">
    <property type="entry name" value="SRI"/>
</dbReference>
<dbReference type="InterPro" id="IPR038190">
    <property type="entry name" value="SRI_sf"/>
</dbReference>
<dbReference type="InterPro" id="IPR001202">
    <property type="entry name" value="WW_dom"/>
</dbReference>
<dbReference type="InterPro" id="IPR036020">
    <property type="entry name" value="WW_dom_sf"/>
</dbReference>
<dbReference type="PANTHER" id="PTHR22884">
    <property type="entry name" value="SET DOMAIN PROTEINS"/>
    <property type="match status" value="1"/>
</dbReference>
<dbReference type="Pfam" id="PF17907">
    <property type="entry name" value="AWS"/>
    <property type="match status" value="1"/>
</dbReference>
<dbReference type="Pfam" id="PF00856">
    <property type="entry name" value="SET"/>
    <property type="match status" value="1"/>
</dbReference>
<dbReference type="Pfam" id="PF08236">
    <property type="entry name" value="SRI"/>
    <property type="match status" value="1"/>
</dbReference>
<dbReference type="Pfam" id="PF18507">
    <property type="entry name" value="WW_1"/>
    <property type="match status" value="1"/>
</dbReference>
<dbReference type="SMART" id="SM00570">
    <property type="entry name" value="AWS"/>
    <property type="match status" value="1"/>
</dbReference>
<dbReference type="SMART" id="SM00508">
    <property type="entry name" value="PostSET"/>
    <property type="match status" value="1"/>
</dbReference>
<dbReference type="SMART" id="SM00317">
    <property type="entry name" value="SET"/>
    <property type="match status" value="1"/>
</dbReference>
<dbReference type="SUPFAM" id="SSF82199">
    <property type="entry name" value="SET domain"/>
    <property type="match status" value="1"/>
</dbReference>
<dbReference type="SUPFAM" id="SSF51045">
    <property type="entry name" value="WW domain"/>
    <property type="match status" value="1"/>
</dbReference>
<dbReference type="PROSITE" id="PS51215">
    <property type="entry name" value="AWS"/>
    <property type="match status" value="1"/>
</dbReference>
<dbReference type="PROSITE" id="PS50868">
    <property type="entry name" value="POST_SET"/>
    <property type="match status" value="1"/>
</dbReference>
<dbReference type="PROSITE" id="PS51568">
    <property type="entry name" value="SAM_MT43_SET2_1"/>
    <property type="match status" value="1"/>
</dbReference>
<dbReference type="PROSITE" id="PS50280">
    <property type="entry name" value="SET"/>
    <property type="match status" value="1"/>
</dbReference>
<reference key="1">
    <citation type="journal article" date="2004" name="Nature">
        <title>Genome evolution in yeasts.</title>
        <authorList>
            <person name="Dujon B."/>
            <person name="Sherman D."/>
            <person name="Fischer G."/>
            <person name="Durrens P."/>
            <person name="Casaregola S."/>
            <person name="Lafontaine I."/>
            <person name="de Montigny J."/>
            <person name="Marck C."/>
            <person name="Neuveglise C."/>
            <person name="Talla E."/>
            <person name="Goffard N."/>
            <person name="Frangeul L."/>
            <person name="Aigle M."/>
            <person name="Anthouard V."/>
            <person name="Babour A."/>
            <person name="Barbe V."/>
            <person name="Barnay S."/>
            <person name="Blanchin S."/>
            <person name="Beckerich J.-M."/>
            <person name="Beyne E."/>
            <person name="Bleykasten C."/>
            <person name="Boisrame A."/>
            <person name="Boyer J."/>
            <person name="Cattolico L."/>
            <person name="Confanioleri F."/>
            <person name="de Daruvar A."/>
            <person name="Despons L."/>
            <person name="Fabre E."/>
            <person name="Fairhead C."/>
            <person name="Ferry-Dumazet H."/>
            <person name="Groppi A."/>
            <person name="Hantraye F."/>
            <person name="Hennequin C."/>
            <person name="Jauniaux N."/>
            <person name="Joyet P."/>
            <person name="Kachouri R."/>
            <person name="Kerrest A."/>
            <person name="Koszul R."/>
            <person name="Lemaire M."/>
            <person name="Lesur I."/>
            <person name="Ma L."/>
            <person name="Muller H."/>
            <person name="Nicaud J.-M."/>
            <person name="Nikolski M."/>
            <person name="Oztas S."/>
            <person name="Ozier-Kalogeropoulos O."/>
            <person name="Pellenz S."/>
            <person name="Potier S."/>
            <person name="Richard G.-F."/>
            <person name="Straub M.-L."/>
            <person name="Suleau A."/>
            <person name="Swennen D."/>
            <person name="Tekaia F."/>
            <person name="Wesolowski-Louvel M."/>
            <person name="Westhof E."/>
            <person name="Wirth B."/>
            <person name="Zeniou-Meyer M."/>
            <person name="Zivanovic Y."/>
            <person name="Bolotin-Fukuhara M."/>
            <person name="Thierry A."/>
            <person name="Bouchier C."/>
            <person name="Caudron B."/>
            <person name="Scarpelli C."/>
            <person name="Gaillardin C."/>
            <person name="Weissenbach J."/>
            <person name="Wincker P."/>
            <person name="Souciet J.-L."/>
        </authorList>
    </citation>
    <scope>NUCLEOTIDE SEQUENCE [LARGE SCALE GENOMIC DNA]</scope>
    <source>
        <strain>ATCC 8585 / CBS 2359 / DSM 70799 / NBRC 1267 / NRRL Y-1140 / WM37</strain>
    </source>
</reference>
<gene>
    <name type="primary">SET2</name>
    <name type="ordered locus">KLLA0A06600g</name>
</gene>
<organism>
    <name type="scientific">Kluyveromyces lactis (strain ATCC 8585 / CBS 2359 / DSM 70799 / NBRC 1267 / NRRL Y-1140 / WM37)</name>
    <name type="common">Yeast</name>
    <name type="synonym">Candida sphaerica</name>
    <dbReference type="NCBI Taxonomy" id="284590"/>
    <lineage>
        <taxon>Eukaryota</taxon>
        <taxon>Fungi</taxon>
        <taxon>Dikarya</taxon>
        <taxon>Ascomycota</taxon>
        <taxon>Saccharomycotina</taxon>
        <taxon>Saccharomycetes</taxon>
        <taxon>Saccharomycetales</taxon>
        <taxon>Saccharomycetaceae</taxon>
        <taxon>Kluyveromyces</taxon>
    </lineage>
</organism>
<accession>Q6CXP5</accession>
<proteinExistence type="inferred from homology"/>
<feature type="chain" id="PRO_0000269790" description="Histone-lysine N-methyltransferase, H3 lysine-36 specific">
    <location>
        <begin position="1"/>
        <end position="702"/>
    </location>
</feature>
<feature type="domain" description="AWS" evidence="6">
    <location>
        <begin position="49"/>
        <end position="105"/>
    </location>
</feature>
<feature type="domain" description="SET" evidence="5">
    <location>
        <begin position="107"/>
        <end position="224"/>
    </location>
</feature>
<feature type="domain" description="Post-SET" evidence="4">
    <location>
        <begin position="231"/>
        <end position="247"/>
    </location>
</feature>
<feature type="domain" description="WW">
    <location>
        <begin position="445"/>
        <end position="477"/>
    </location>
</feature>
<feature type="region of interest" description="Disordered" evidence="8">
    <location>
        <begin position="472"/>
        <end position="541"/>
    </location>
</feature>
<feature type="region of interest" description="Disordered" evidence="8">
    <location>
        <begin position="656"/>
        <end position="678"/>
    </location>
</feature>
<feature type="coiled-coil region" evidence="3">
    <location>
        <begin position="554"/>
        <end position="611"/>
    </location>
</feature>
<feature type="compositionally biased region" description="Polar residues" evidence="8">
    <location>
        <begin position="472"/>
        <end position="490"/>
    </location>
</feature>
<feature type="compositionally biased region" description="Polar residues" evidence="8">
    <location>
        <begin position="497"/>
        <end position="509"/>
    </location>
</feature>
<feature type="compositionally biased region" description="Polar residues" evidence="8">
    <location>
        <begin position="519"/>
        <end position="528"/>
    </location>
</feature>
<feature type="compositionally biased region" description="Basic and acidic residues" evidence="8">
    <location>
        <begin position="529"/>
        <end position="541"/>
    </location>
</feature>
<feature type="compositionally biased region" description="Basic and acidic residues" evidence="8">
    <location>
        <begin position="656"/>
        <end position="674"/>
    </location>
</feature>